<reference key="1">
    <citation type="journal article" date="1998" name="J. Biol. Chem.">
        <title>Characterization of the human analogue of a scrapie-responsive gene.</title>
        <authorList>
            <person name="Dron M."/>
            <person name="Dandoy-Dron F."/>
            <person name="Guillo F."/>
            <person name="Benboudjema L."/>
            <person name="Hauw J.-J."/>
            <person name="Lebon P."/>
            <person name="Dormont D."/>
            <person name="Tovey M.G."/>
        </authorList>
    </citation>
    <scope>NUCLEOTIDE SEQUENCE [MRNA]</scope>
    <source>
        <tissue>Brain</tissue>
    </source>
</reference>
<reference key="2">
    <citation type="journal article" date="2003" name="Genome Res.">
        <title>The secreted protein discovery initiative (SPDI), a large-scale effort to identify novel human secreted and transmembrane proteins: a bioinformatics assessment.</title>
        <authorList>
            <person name="Clark H.F."/>
            <person name="Gurney A.L."/>
            <person name="Abaya E."/>
            <person name="Baker K."/>
            <person name="Baldwin D.T."/>
            <person name="Brush J."/>
            <person name="Chen J."/>
            <person name="Chow B."/>
            <person name="Chui C."/>
            <person name="Crowley C."/>
            <person name="Currell B."/>
            <person name="Deuel B."/>
            <person name="Dowd P."/>
            <person name="Eaton D."/>
            <person name="Foster J.S."/>
            <person name="Grimaldi C."/>
            <person name="Gu Q."/>
            <person name="Hass P.E."/>
            <person name="Heldens S."/>
            <person name="Huang A."/>
            <person name="Kim H.S."/>
            <person name="Klimowski L."/>
            <person name="Jin Y."/>
            <person name="Johnson S."/>
            <person name="Lee J."/>
            <person name="Lewis L."/>
            <person name="Liao D."/>
            <person name="Mark M.R."/>
            <person name="Robbie E."/>
            <person name="Sanchez C."/>
            <person name="Schoenfeld J."/>
            <person name="Seshagiri S."/>
            <person name="Simmons L."/>
            <person name="Singh J."/>
            <person name="Smith V."/>
            <person name="Stinson J."/>
            <person name="Vagts A."/>
            <person name="Vandlen R.L."/>
            <person name="Watanabe C."/>
            <person name="Wieand D."/>
            <person name="Woods K."/>
            <person name="Xie M.-H."/>
            <person name="Yansura D.G."/>
            <person name="Yi S."/>
            <person name="Yu G."/>
            <person name="Yuan J."/>
            <person name="Zhang M."/>
            <person name="Zhang Z."/>
            <person name="Goddard A.D."/>
            <person name="Wood W.I."/>
            <person name="Godowski P.J."/>
            <person name="Gray A.M."/>
        </authorList>
    </citation>
    <scope>NUCLEOTIDE SEQUENCE [LARGE SCALE MRNA]</scope>
</reference>
<reference key="3">
    <citation type="journal article" date="2004" name="Protein Sci.">
        <title>Signal peptide prediction based on analysis of experimentally verified cleavage sites.</title>
        <authorList>
            <person name="Zhang Z."/>
            <person name="Henzel W.J."/>
        </authorList>
    </citation>
    <scope>PROTEIN SEQUENCE OF 21-35</scope>
</reference>
<accession>O75711</accession>
<gene>
    <name type="primary">SCRG1</name>
    <name type="ORF">UNQ390/PRO725</name>
</gene>
<keyword id="KW-0903">Direct protein sequencing</keyword>
<keyword id="KW-0325">Glycoprotein</keyword>
<keyword id="KW-1267">Proteomics identification</keyword>
<keyword id="KW-1185">Reference proteome</keyword>
<keyword id="KW-0964">Secreted</keyword>
<keyword id="KW-0732">Signal</keyword>
<evidence type="ECO:0000255" key="1"/>
<evidence type="ECO:0000269" key="2">
    <source>
    </source>
</evidence>
<evidence type="ECO:0000305" key="3"/>
<comment type="interaction">
    <interactant intactId="EBI-10189029">
        <id>O75711</id>
    </interactant>
    <interactant intactId="EBI-744545">
        <id>Q8NEC5</id>
        <label>CATSPER1</label>
    </interactant>
    <organismsDiffer>false</organismsDiffer>
    <experiments>3</experiments>
</comment>
<comment type="interaction">
    <interactant intactId="EBI-10189029">
        <id>O75711</id>
    </interactant>
    <interactant intactId="EBI-18304435">
        <id>Q5JX71</id>
        <label>FAM209A</label>
    </interactant>
    <organismsDiffer>false</organismsDiffer>
    <experiments>3</experiments>
</comment>
<comment type="interaction">
    <interactant intactId="EBI-10189029">
        <id>O75711</id>
    </interactant>
    <interactant intactId="EBI-3867271">
        <id>Q9NQG1</id>
        <label>MANBAL</label>
    </interactant>
    <organismsDiffer>false</organismsDiffer>
    <experiments>3</experiments>
</comment>
<comment type="interaction">
    <interactant intactId="EBI-10189029">
        <id>O75711</id>
    </interactant>
    <interactant intactId="EBI-8638294">
        <id>Q9NUH8</id>
        <label>TMEM14B</label>
    </interactant>
    <organismsDiffer>false</organismsDiffer>
    <experiments>3</experiments>
</comment>
<comment type="subcellular location">
    <subcellularLocation>
        <location evidence="3">Secreted</location>
    </subcellularLocation>
</comment>
<comment type="tissue specificity">
    <text>Expressed abundantly in the central nervous system of adult, but not at all in fetal brain. High levels of SCRG1 transcripts are also observed in testis and aorta.</text>
</comment>
<comment type="similarity">
    <text evidence="3">Belongs to the SCRG1 family.</text>
</comment>
<sequence length="98" mass="11081">MKLMVLVFTIGLTLLLGVQAMPANRLSCYRKILKDHNCHNLPEGVADLTQIDVNVQDHFWDGKGCEMICYCNFSELLCCPKDVFFGPKISFVIPCNNQ</sequence>
<name>SCRG1_HUMAN</name>
<protein>
    <recommendedName>
        <fullName>Scrapie-responsive protein 1</fullName>
    </recommendedName>
    <alternativeName>
        <fullName>Scrapie-responsive gene 1 protein</fullName>
        <shortName>ScRG-1</shortName>
    </alternativeName>
</protein>
<organism>
    <name type="scientific">Homo sapiens</name>
    <name type="common">Human</name>
    <dbReference type="NCBI Taxonomy" id="9606"/>
    <lineage>
        <taxon>Eukaryota</taxon>
        <taxon>Metazoa</taxon>
        <taxon>Chordata</taxon>
        <taxon>Craniata</taxon>
        <taxon>Vertebrata</taxon>
        <taxon>Euteleostomi</taxon>
        <taxon>Mammalia</taxon>
        <taxon>Eutheria</taxon>
        <taxon>Euarchontoglires</taxon>
        <taxon>Primates</taxon>
        <taxon>Haplorrhini</taxon>
        <taxon>Catarrhini</taxon>
        <taxon>Hominidae</taxon>
        <taxon>Homo</taxon>
    </lineage>
</organism>
<feature type="signal peptide" evidence="2">
    <location>
        <begin position="1"/>
        <end position="20"/>
    </location>
</feature>
<feature type="chain" id="PRO_0000022283" description="Scrapie-responsive protein 1">
    <location>
        <begin position="21"/>
        <end position="98"/>
    </location>
</feature>
<feature type="glycosylation site" description="N-linked (GlcNAc...) asparagine" evidence="1">
    <location>
        <position position="72"/>
    </location>
</feature>
<feature type="sequence variant" id="VAR_020329" description="In dbSNP:rs2306465.">
    <original>P</original>
    <variation>L</variation>
    <location>
        <position position="42"/>
    </location>
</feature>
<proteinExistence type="evidence at protein level"/>
<dbReference type="EMBL" id="AJ224677">
    <property type="protein sequence ID" value="CAA12059.1"/>
    <property type="molecule type" value="mRNA"/>
</dbReference>
<dbReference type="EMBL" id="AY359040">
    <property type="protein sequence ID" value="AAQ89399.1"/>
    <property type="molecule type" value="mRNA"/>
</dbReference>
<dbReference type="CCDS" id="CCDS3818.1"/>
<dbReference type="RefSeq" id="NP_001316526.1">
    <property type="nucleotide sequence ID" value="NM_001329597.2"/>
</dbReference>
<dbReference type="RefSeq" id="NP_009212.1">
    <property type="nucleotide sequence ID" value="NM_007281.4"/>
</dbReference>
<dbReference type="RefSeq" id="XP_047305519.1">
    <property type="nucleotide sequence ID" value="XM_047449563.1"/>
</dbReference>
<dbReference type="RefSeq" id="XP_054204820.1">
    <property type="nucleotide sequence ID" value="XM_054348845.1"/>
</dbReference>
<dbReference type="BioGRID" id="116469">
    <property type="interactions" value="5"/>
</dbReference>
<dbReference type="FunCoup" id="O75711">
    <property type="interactions" value="7"/>
</dbReference>
<dbReference type="IntAct" id="O75711">
    <property type="interactions" value="4"/>
</dbReference>
<dbReference type="STRING" id="9606.ENSP00000296506"/>
<dbReference type="GlyCosmos" id="O75711">
    <property type="glycosylation" value="1 site, No reported glycans"/>
</dbReference>
<dbReference type="GlyGen" id="O75711">
    <property type="glycosylation" value="1 site"/>
</dbReference>
<dbReference type="iPTMnet" id="O75711"/>
<dbReference type="PhosphoSitePlus" id="O75711"/>
<dbReference type="BioMuta" id="SCRG1"/>
<dbReference type="MassIVE" id="O75711"/>
<dbReference type="PaxDb" id="9606-ENSP00000296506"/>
<dbReference type="PeptideAtlas" id="O75711"/>
<dbReference type="ProteomicsDB" id="50169"/>
<dbReference type="Antibodypedia" id="2568">
    <property type="antibodies" value="52 antibodies from 13 providers"/>
</dbReference>
<dbReference type="DNASU" id="11341"/>
<dbReference type="Ensembl" id="ENST00000296506.8">
    <property type="protein sequence ID" value="ENSP00000296506.2"/>
    <property type="gene ID" value="ENSG00000164106.8"/>
</dbReference>
<dbReference type="GeneID" id="11341"/>
<dbReference type="KEGG" id="hsa:11341"/>
<dbReference type="MANE-Select" id="ENST00000296506.8">
    <property type="protein sequence ID" value="ENSP00000296506.2"/>
    <property type="RefSeq nucleotide sequence ID" value="NM_007281.4"/>
    <property type="RefSeq protein sequence ID" value="NP_009212.1"/>
</dbReference>
<dbReference type="AGR" id="HGNC:17036"/>
<dbReference type="CTD" id="11341"/>
<dbReference type="DisGeNET" id="11341"/>
<dbReference type="GeneCards" id="SCRG1"/>
<dbReference type="HGNC" id="HGNC:17036">
    <property type="gene designation" value="SCRG1"/>
</dbReference>
<dbReference type="HPA" id="ENSG00000164106">
    <property type="expression patterns" value="Group enriched (brain, testis)"/>
</dbReference>
<dbReference type="MIM" id="603163">
    <property type="type" value="gene"/>
</dbReference>
<dbReference type="neXtProt" id="NX_O75711"/>
<dbReference type="OpenTargets" id="ENSG00000164106"/>
<dbReference type="PharmGKB" id="PA165664478"/>
<dbReference type="VEuPathDB" id="HostDB:ENSG00000164106"/>
<dbReference type="eggNOG" id="ENOG502S6ID">
    <property type="taxonomic scope" value="Eukaryota"/>
</dbReference>
<dbReference type="GeneTree" id="ENSGT00390000009191"/>
<dbReference type="HOGENOM" id="CLU_163466_0_0_1"/>
<dbReference type="InParanoid" id="O75711"/>
<dbReference type="OMA" id="NVPDHFW"/>
<dbReference type="OrthoDB" id="8865355at2759"/>
<dbReference type="PAN-GO" id="O75711">
    <property type="GO annotations" value="2 GO annotations based on evolutionary models"/>
</dbReference>
<dbReference type="PhylomeDB" id="O75711"/>
<dbReference type="TreeFam" id="TF335779"/>
<dbReference type="PathwayCommons" id="O75711"/>
<dbReference type="SignaLink" id="O75711"/>
<dbReference type="BioGRID-ORCS" id="11341">
    <property type="hits" value="10 hits in 1140 CRISPR screens"/>
</dbReference>
<dbReference type="ChiTaRS" id="SCRG1">
    <property type="organism name" value="human"/>
</dbReference>
<dbReference type="GenomeRNAi" id="11341"/>
<dbReference type="Pharos" id="O75711">
    <property type="development level" value="Tbio"/>
</dbReference>
<dbReference type="PRO" id="PR:O75711"/>
<dbReference type="Proteomes" id="UP000005640">
    <property type="component" value="Chromosome 4"/>
</dbReference>
<dbReference type="RNAct" id="O75711">
    <property type="molecule type" value="protein"/>
</dbReference>
<dbReference type="Bgee" id="ENSG00000164106">
    <property type="expression patterns" value="Expressed in tibia and 165 other cell types or tissues"/>
</dbReference>
<dbReference type="ExpressionAtlas" id="O75711">
    <property type="expression patterns" value="baseline and differential"/>
</dbReference>
<dbReference type="GO" id="GO:0005615">
    <property type="term" value="C:extracellular space"/>
    <property type="evidence" value="ECO:0000304"/>
    <property type="project" value="ProtInc"/>
</dbReference>
<dbReference type="GO" id="GO:0005794">
    <property type="term" value="C:Golgi apparatus"/>
    <property type="evidence" value="ECO:0000318"/>
    <property type="project" value="GO_Central"/>
</dbReference>
<dbReference type="GO" id="GO:0044306">
    <property type="term" value="C:neuron projection terminus"/>
    <property type="evidence" value="ECO:0000318"/>
    <property type="project" value="GO_Central"/>
</dbReference>
<dbReference type="GO" id="GO:0007399">
    <property type="term" value="P:nervous system development"/>
    <property type="evidence" value="ECO:0000304"/>
    <property type="project" value="ProtInc"/>
</dbReference>
<dbReference type="InterPro" id="IPR028063">
    <property type="entry name" value="SCRG1"/>
</dbReference>
<dbReference type="PANTHER" id="PTHR17463:SF0">
    <property type="entry name" value="SCRAPIE-RESPONSIVE PROTEIN 1"/>
    <property type="match status" value="1"/>
</dbReference>
<dbReference type="PANTHER" id="PTHR17463">
    <property type="entry name" value="SCRAPIE-RESPONSIVE PROTEIN 1 SCRG1"/>
    <property type="match status" value="1"/>
</dbReference>
<dbReference type="Pfam" id="PF15224">
    <property type="entry name" value="SCRG1"/>
    <property type="match status" value="1"/>
</dbReference>